<sequence>MLLSSSMPLNLGKRIFGYNSYLLTDIIIYHIVINNKWIQYFLGIRLIKAYVPCEKCSYEKVAEYENFKITHNLFDADVCIDDPVLFLKRIKGLEDEVTCLLWGDTVYDALYYKNEMAKYDNVIMASYWNYQMFEKLGYKIKGVMKRHIKPIFVGEKKDKIFVTLGESRYFDRKNLTLIDKITREFGVRDKTIIIGNLGNPDYPTFQLSEEEKYRLYARSKFFLALSKSEGFGIPPIEAMALGVVPIYLDAHGYKENLVGIPIDPIDEYTYCVDNKHCFRVWDLSIHELRYEINHALTIGKDEYEDLSEKAKNKARGYIIATMESSDFR</sequence>
<dbReference type="EC" id="2.4.-.-"/>
<dbReference type="EMBL" id="AF440571">
    <property type="protein sequence ID" value="AAL27751.1"/>
    <property type="molecule type" value="Genomic_DNA"/>
</dbReference>
<dbReference type="RefSeq" id="NP_445705.1">
    <property type="nucleotide sequence ID" value="NC_003214.2"/>
</dbReference>
<dbReference type="SMR" id="Q914J0"/>
<dbReference type="CAZy" id="GT4">
    <property type="family name" value="Glycosyltransferase Family 4"/>
</dbReference>
<dbReference type="GeneID" id="922279"/>
<dbReference type="KEGG" id="vg:922279"/>
<dbReference type="Proteomes" id="UP000007017">
    <property type="component" value="Segment"/>
</dbReference>
<dbReference type="GO" id="GO:0016757">
    <property type="term" value="F:glycosyltransferase activity"/>
    <property type="evidence" value="ECO:0007669"/>
    <property type="project" value="UniProtKB-KW"/>
</dbReference>
<dbReference type="Gene3D" id="3.40.50.2000">
    <property type="entry name" value="Glycogen Phosphorylase B"/>
    <property type="match status" value="1"/>
</dbReference>
<dbReference type="InterPro" id="IPR001296">
    <property type="entry name" value="Glyco_trans_1"/>
</dbReference>
<dbReference type="Pfam" id="PF00534">
    <property type="entry name" value="Glycos_transf_1"/>
    <property type="match status" value="1"/>
</dbReference>
<dbReference type="SUPFAM" id="SSF53756">
    <property type="entry name" value="UDP-Glycosyltransferase/glycogen phosphorylase"/>
    <property type="match status" value="1"/>
</dbReference>
<feature type="chain" id="PRO_0000385377" description="Putative glycosyltransferase 41">
    <location>
        <begin position="1"/>
        <end position="328"/>
    </location>
</feature>
<organism>
    <name type="scientific">Sulfolobus islandicus filamentous virus (isolate Iceland/Hveragerdi)</name>
    <name type="common">SIFV</name>
    <dbReference type="NCBI Taxonomy" id="654908"/>
    <lineage>
        <taxon>Viruses</taxon>
        <taxon>Adnaviria</taxon>
        <taxon>Zilligvirae</taxon>
        <taxon>Taleaviricota</taxon>
        <taxon>Tokiviricetes</taxon>
        <taxon>Ligamenvirales</taxon>
        <taxon>Lipothrixviridae</taxon>
        <taxon>Betalipothrixvirus</taxon>
        <taxon>Sulfolobus islandicus filamentous virus</taxon>
    </lineage>
</organism>
<accession>Q914J0</accession>
<proteinExistence type="inferred from homology"/>
<gene>
    <name type="primary">SIFV0041</name>
</gene>
<organismHost>
    <name type="scientific">Saccharolobus islandicus</name>
    <name type="common">Sulfolobus islandicus</name>
    <dbReference type="NCBI Taxonomy" id="43080"/>
</organismHost>
<protein>
    <recommendedName>
        <fullName>Putative glycosyltransferase 41</fullName>
        <ecNumber>2.4.-.-</ecNumber>
    </recommendedName>
</protein>
<evidence type="ECO:0000305" key="1"/>
<keyword id="KW-0328">Glycosyltransferase</keyword>
<keyword id="KW-1185">Reference proteome</keyword>
<keyword id="KW-0808">Transferase</keyword>
<reference key="1">
    <citation type="journal article" date="2000" name="Virology">
        <title>A novel lipothrixvirus, SIFV, of the extremely thermophilic crenarchaeon Sulfolobus.</title>
        <authorList>
            <person name="Arnold H.P."/>
            <person name="Zillig W."/>
            <person name="Ziese U."/>
            <person name="Holz I."/>
            <person name="Crosby M."/>
            <person name="Utterback T."/>
            <person name="Weidmann J.F."/>
            <person name="Umayam L.A."/>
            <person name="Teffera K."/>
            <person name="Kristjanson J.K."/>
            <person name="Klenk H.P."/>
            <person name="Nelson K.E."/>
            <person name="Fraser C.M."/>
        </authorList>
    </citation>
    <scope>NUCLEOTIDE SEQUENCE [GENOMIC DNA]</scope>
</reference>
<name>GT041_SIFVH</name>
<comment type="similarity">
    <text evidence="1">Belongs to the glycosyltransferase group 1 family. Glycosyltransferase 4 subfamily.</text>
</comment>